<reference key="1">
    <citation type="journal article" date="2002" name="Appl. Environ. Microbiol.">
        <title>oriC region and replication termination site, dif, of the Xanthomonas campestris pv. campestris 17 chromosome.</title>
        <authorList>
            <person name="Yen M.R."/>
            <person name="Lin N.T."/>
            <person name="Hung C.H."/>
            <person name="Choy K.T."/>
            <person name="Weng S.F."/>
            <person name="Tseng Y.H."/>
        </authorList>
    </citation>
    <scope>NUCLEOTIDE SEQUENCE [GENOMIC DNA]</scope>
    <source>
        <strain>Xc17</strain>
    </source>
</reference>
<reference key="2">
    <citation type="journal article" date="2002" name="Nature">
        <title>Comparison of the genomes of two Xanthomonas pathogens with differing host specificities.</title>
        <authorList>
            <person name="da Silva A.C.R."/>
            <person name="Ferro J.A."/>
            <person name="Reinach F.C."/>
            <person name="Farah C.S."/>
            <person name="Furlan L.R."/>
            <person name="Quaggio R.B."/>
            <person name="Monteiro-Vitorello C.B."/>
            <person name="Van Sluys M.A."/>
            <person name="Almeida N.F. Jr."/>
            <person name="Alves L.M.C."/>
            <person name="do Amaral A.M."/>
            <person name="Bertolini M.C."/>
            <person name="Camargo L.E.A."/>
            <person name="Camarotte G."/>
            <person name="Cannavan F."/>
            <person name="Cardozo J."/>
            <person name="Chambergo F."/>
            <person name="Ciapina L.P."/>
            <person name="Cicarelli R.M.B."/>
            <person name="Coutinho L.L."/>
            <person name="Cursino-Santos J.R."/>
            <person name="El-Dorry H."/>
            <person name="Faria J.B."/>
            <person name="Ferreira A.J.S."/>
            <person name="Ferreira R.C.C."/>
            <person name="Ferro M.I.T."/>
            <person name="Formighieri E.F."/>
            <person name="Franco M.C."/>
            <person name="Greggio C.C."/>
            <person name="Gruber A."/>
            <person name="Katsuyama A.M."/>
            <person name="Kishi L.T."/>
            <person name="Leite R.P."/>
            <person name="Lemos E.G.M."/>
            <person name="Lemos M.V.F."/>
            <person name="Locali E.C."/>
            <person name="Machado M.A."/>
            <person name="Madeira A.M.B.N."/>
            <person name="Martinez-Rossi N.M."/>
            <person name="Martins E.C."/>
            <person name="Meidanis J."/>
            <person name="Menck C.F.M."/>
            <person name="Miyaki C.Y."/>
            <person name="Moon D.H."/>
            <person name="Moreira L.M."/>
            <person name="Novo M.T.M."/>
            <person name="Okura V.K."/>
            <person name="Oliveira M.C."/>
            <person name="Oliveira V.R."/>
            <person name="Pereira H.A."/>
            <person name="Rossi A."/>
            <person name="Sena J.A.D."/>
            <person name="Silva C."/>
            <person name="de Souza R.F."/>
            <person name="Spinola L.A.F."/>
            <person name="Takita M.A."/>
            <person name="Tamura R.E."/>
            <person name="Teixeira E.C."/>
            <person name="Tezza R.I.D."/>
            <person name="Trindade dos Santos M."/>
            <person name="Truffi D."/>
            <person name="Tsai S.M."/>
            <person name="White F.F."/>
            <person name="Setubal J.C."/>
            <person name="Kitajima J.P."/>
        </authorList>
    </citation>
    <scope>NUCLEOTIDE SEQUENCE [LARGE SCALE GENOMIC DNA]</scope>
    <source>
        <strain>ATCC 33913 / DSM 3586 / NCPPB 528 / LMG 568 / P 25</strain>
    </source>
</reference>
<protein>
    <recommendedName>
        <fullName evidence="1">Membrane protein insertase YidC</fullName>
    </recommendedName>
    <alternativeName>
        <fullName evidence="1">Foldase YidC</fullName>
    </alternativeName>
    <alternativeName>
        <fullName evidence="1">Membrane integrase YidC</fullName>
    </alternativeName>
    <alternativeName>
        <fullName evidence="1">Membrane protein YidC</fullName>
    </alternativeName>
</protein>
<evidence type="ECO:0000255" key="1">
    <source>
        <dbReference type="HAMAP-Rule" id="MF_01810"/>
    </source>
</evidence>
<evidence type="ECO:0000305" key="2"/>
<gene>
    <name evidence="1" type="primary">yidC</name>
    <name type="ordered locus">XCC4240</name>
</gene>
<sequence length="573" mass="63344">MNQTRVFLIFAWLMVAALLWMEWGKDKAAANAPTPIASQAVPAARDPDAAAPAANVPSAQAIPQAGSPAAVPATSTTTATPATTGAAPAITLTSDVLRLKLDGRSVLDAELLQFPQTKDGTEPVKLLTEDAAHPYNATSGWASERSPVPGVGGFRAEQPGTTFELAKGQNTLVVPFVWNGPNGVSIRRIFTLQRGSYAISIKDEVINKSDAAWNGYVFRKLSRVPTILSRGMTNPDSFSFNGATWYSPQEGYERRAFKDYMDDGGLNRQITGGWVALLQHHFFTAWIPQKDQASLYVLAQDGPRDVAELRGPAFTVAPGQSASTEARLWVGPKLVSLLAKEDVKGLDRVVDYSRFSIMAIIGQGLFWVLSHLHSFLHNWGWAIIGLVVLLRLALYPLSAAQYKSGAKMRRFQPRLAQLKERYGDDRQKYQQATMELFKKEKINPMGGCLPLLIQMPIFFALYWVLVESVELRQAPWLGWIQDLTARDPYFILPVLNIAIMWATQKLTPTPGMDPMQAKMMQFMPLVFGVMMAFMPAGLVLYWVVNGGLGLLIQWWMIRQHGEKPSKIIQANAK</sequence>
<comment type="function">
    <text evidence="1">Required for the insertion and/or proper folding and/or complex formation of integral membrane proteins into the membrane. Involved in integration of membrane proteins that insert both dependently and independently of the Sec translocase complex, as well as at least some lipoproteins. Aids folding of multispanning membrane proteins.</text>
</comment>
<comment type="subunit">
    <text evidence="1">Interacts with the Sec translocase complex via SecD. Specifically interacts with transmembrane segments of nascent integral membrane proteins during membrane integration.</text>
</comment>
<comment type="subcellular location">
    <subcellularLocation>
        <location evidence="1">Cell inner membrane</location>
        <topology evidence="1">Multi-pass membrane protein</topology>
    </subcellularLocation>
</comment>
<comment type="similarity">
    <text evidence="1">Belongs to the OXA1/ALB3/YidC family. Type 1 subfamily.</text>
</comment>
<organism>
    <name type="scientific">Xanthomonas campestris pv. campestris (strain ATCC 33913 / DSM 3586 / NCPPB 528 / LMG 568 / P 25)</name>
    <dbReference type="NCBI Taxonomy" id="190485"/>
    <lineage>
        <taxon>Bacteria</taxon>
        <taxon>Pseudomonadati</taxon>
        <taxon>Pseudomonadota</taxon>
        <taxon>Gammaproteobacteria</taxon>
        <taxon>Lysobacterales</taxon>
        <taxon>Lysobacteraceae</taxon>
        <taxon>Xanthomonas</taxon>
    </lineage>
</organism>
<proteinExistence type="inferred from homology"/>
<dbReference type="EMBL" id="AY057934">
    <property type="protein sequence ID" value="AAL30086.1"/>
    <property type="molecule type" value="Genomic_DNA"/>
</dbReference>
<dbReference type="EMBL" id="AE008922">
    <property type="protein sequence ID" value="AAM43456.1"/>
    <property type="molecule type" value="Genomic_DNA"/>
</dbReference>
<dbReference type="RefSeq" id="NP_639574.1">
    <property type="nucleotide sequence ID" value="NC_003902.1"/>
</dbReference>
<dbReference type="RefSeq" id="WP_011039301.1">
    <property type="nucleotide sequence ID" value="NC_003902.1"/>
</dbReference>
<dbReference type="SMR" id="Q8P338"/>
<dbReference type="STRING" id="190485.XCC4240"/>
<dbReference type="EnsemblBacteria" id="AAM43456">
    <property type="protein sequence ID" value="AAM43456"/>
    <property type="gene ID" value="XCC4240"/>
</dbReference>
<dbReference type="KEGG" id="xcc:XCC4240"/>
<dbReference type="PATRIC" id="fig|190485.4.peg.4553"/>
<dbReference type="eggNOG" id="COG0706">
    <property type="taxonomic scope" value="Bacteria"/>
</dbReference>
<dbReference type="HOGENOM" id="CLU_016535_3_0_6"/>
<dbReference type="OrthoDB" id="9780552at2"/>
<dbReference type="Proteomes" id="UP000001010">
    <property type="component" value="Chromosome"/>
</dbReference>
<dbReference type="GO" id="GO:0005886">
    <property type="term" value="C:plasma membrane"/>
    <property type="evidence" value="ECO:0000318"/>
    <property type="project" value="GO_Central"/>
</dbReference>
<dbReference type="GO" id="GO:0032977">
    <property type="term" value="F:membrane insertase activity"/>
    <property type="evidence" value="ECO:0000318"/>
    <property type="project" value="GO_Central"/>
</dbReference>
<dbReference type="GO" id="GO:0051205">
    <property type="term" value="P:protein insertion into membrane"/>
    <property type="evidence" value="ECO:0000318"/>
    <property type="project" value="GO_Central"/>
</dbReference>
<dbReference type="GO" id="GO:0015031">
    <property type="term" value="P:protein transport"/>
    <property type="evidence" value="ECO:0007669"/>
    <property type="project" value="UniProtKB-KW"/>
</dbReference>
<dbReference type="CDD" id="cd20070">
    <property type="entry name" value="5TM_YidC_Alb3"/>
    <property type="match status" value="1"/>
</dbReference>
<dbReference type="CDD" id="cd19961">
    <property type="entry name" value="EcYidC-like_peri"/>
    <property type="match status" value="1"/>
</dbReference>
<dbReference type="Gene3D" id="2.70.98.90">
    <property type="match status" value="1"/>
</dbReference>
<dbReference type="HAMAP" id="MF_01810">
    <property type="entry name" value="YidC_type1"/>
    <property type="match status" value="1"/>
</dbReference>
<dbReference type="InterPro" id="IPR019998">
    <property type="entry name" value="Membr_insert_YidC"/>
</dbReference>
<dbReference type="InterPro" id="IPR028053">
    <property type="entry name" value="Membr_insert_YidC_N"/>
</dbReference>
<dbReference type="InterPro" id="IPR001708">
    <property type="entry name" value="YidC/ALB3/OXA1/COX18"/>
</dbReference>
<dbReference type="InterPro" id="IPR028055">
    <property type="entry name" value="YidC/Oxa/ALB_C"/>
</dbReference>
<dbReference type="InterPro" id="IPR047196">
    <property type="entry name" value="YidC_ALB_C"/>
</dbReference>
<dbReference type="InterPro" id="IPR038221">
    <property type="entry name" value="YidC_periplasmic_sf"/>
</dbReference>
<dbReference type="NCBIfam" id="NF002352">
    <property type="entry name" value="PRK01318.1-3"/>
    <property type="match status" value="1"/>
</dbReference>
<dbReference type="NCBIfam" id="TIGR03593">
    <property type="entry name" value="yidC_nterm"/>
    <property type="match status" value="1"/>
</dbReference>
<dbReference type="NCBIfam" id="TIGR03592">
    <property type="entry name" value="yidC_oxa1_cterm"/>
    <property type="match status" value="1"/>
</dbReference>
<dbReference type="PANTHER" id="PTHR12428:SF65">
    <property type="entry name" value="CYTOCHROME C OXIDASE ASSEMBLY PROTEIN COX18, MITOCHONDRIAL"/>
    <property type="match status" value="1"/>
</dbReference>
<dbReference type="PANTHER" id="PTHR12428">
    <property type="entry name" value="OXA1"/>
    <property type="match status" value="1"/>
</dbReference>
<dbReference type="Pfam" id="PF02096">
    <property type="entry name" value="60KD_IMP"/>
    <property type="match status" value="1"/>
</dbReference>
<dbReference type="Pfam" id="PF14849">
    <property type="entry name" value="YidC_periplas"/>
    <property type="match status" value="1"/>
</dbReference>
<dbReference type="PRINTS" id="PR00701">
    <property type="entry name" value="60KDINNERMP"/>
</dbReference>
<dbReference type="PRINTS" id="PR01900">
    <property type="entry name" value="YIDCPROTEIN"/>
</dbReference>
<accession>Q8P338</accession>
<accession>Q8KQT4</accession>
<keyword id="KW-0997">Cell inner membrane</keyword>
<keyword id="KW-1003">Cell membrane</keyword>
<keyword id="KW-0143">Chaperone</keyword>
<keyword id="KW-0472">Membrane</keyword>
<keyword id="KW-0653">Protein transport</keyword>
<keyword id="KW-1185">Reference proteome</keyword>
<keyword id="KW-0812">Transmembrane</keyword>
<keyword id="KW-1133">Transmembrane helix</keyword>
<keyword id="KW-0813">Transport</keyword>
<feature type="chain" id="PRO_0000124772" description="Membrane protein insertase YidC">
    <location>
        <begin position="1"/>
        <end position="573"/>
    </location>
</feature>
<feature type="transmembrane region" description="Helical" evidence="1">
    <location>
        <begin position="6"/>
        <end position="26"/>
    </location>
</feature>
<feature type="transmembrane region" description="Helical" evidence="1">
    <location>
        <begin position="355"/>
        <end position="375"/>
    </location>
</feature>
<feature type="transmembrane region" description="Helical" evidence="1">
    <location>
        <begin position="379"/>
        <end position="399"/>
    </location>
</feature>
<feature type="transmembrane region" description="Helical" evidence="1">
    <location>
        <begin position="446"/>
        <end position="466"/>
    </location>
</feature>
<feature type="transmembrane region" description="Helical" evidence="1">
    <location>
        <begin position="488"/>
        <end position="508"/>
    </location>
</feature>
<feature type="transmembrane region" description="Helical" evidence="1">
    <location>
        <begin position="524"/>
        <end position="544"/>
    </location>
</feature>
<feature type="sequence conflict" description="In Ref. 2; AAL30086." evidence="2" ref="2">
    <original>P</original>
    <variation>S</variation>
    <location>
        <position position="134"/>
    </location>
</feature>
<name>YIDC_XANCP</name>